<reference key="1">
    <citation type="journal article" date="2009" name="Environ. Microbiol.">
        <title>Contribution of mobile genetic elements to Desulfovibrio vulgaris genome plasticity.</title>
        <authorList>
            <person name="Walker C.B."/>
            <person name="Stolyar S."/>
            <person name="Chivian D."/>
            <person name="Pinel N."/>
            <person name="Gabster J.A."/>
            <person name="Dehal P.S."/>
            <person name="He Z."/>
            <person name="Yang Z.K."/>
            <person name="Yen H.C."/>
            <person name="Zhou J."/>
            <person name="Wall J.D."/>
            <person name="Hazen T.C."/>
            <person name="Arkin A.P."/>
            <person name="Stahl D.A."/>
        </authorList>
    </citation>
    <scope>NUCLEOTIDE SEQUENCE [LARGE SCALE GENOMIC DNA]</scope>
    <source>
        <strain>DP4</strain>
    </source>
</reference>
<organism>
    <name type="scientific">Nitratidesulfovibrio vulgaris (strain DP4)</name>
    <name type="common">Desulfovibrio vulgaris</name>
    <dbReference type="NCBI Taxonomy" id="391774"/>
    <lineage>
        <taxon>Bacteria</taxon>
        <taxon>Pseudomonadati</taxon>
        <taxon>Thermodesulfobacteriota</taxon>
        <taxon>Desulfovibrionia</taxon>
        <taxon>Desulfovibrionales</taxon>
        <taxon>Desulfovibrionaceae</taxon>
        <taxon>Nitratidesulfovibrio</taxon>
    </lineage>
</organism>
<protein>
    <recommendedName>
        <fullName evidence="1">tRNA uridine 5-carboxymethylaminomethyl modification enzyme MnmG</fullName>
    </recommendedName>
    <alternativeName>
        <fullName evidence="1">Glucose-inhibited division protein A</fullName>
    </alternativeName>
</protein>
<feature type="chain" id="PRO_1000016590" description="tRNA uridine 5-carboxymethylaminomethyl modification enzyme MnmG">
    <location>
        <begin position="1"/>
        <end position="629"/>
    </location>
</feature>
<feature type="binding site" evidence="1">
    <location>
        <begin position="19"/>
        <end position="24"/>
    </location>
    <ligand>
        <name>FAD</name>
        <dbReference type="ChEBI" id="CHEBI:57692"/>
    </ligand>
</feature>
<feature type="binding site" evidence="1">
    <location>
        <begin position="278"/>
        <end position="292"/>
    </location>
    <ligand>
        <name>NAD(+)</name>
        <dbReference type="ChEBI" id="CHEBI:57540"/>
    </ligand>
</feature>
<accession>A1VD34</accession>
<comment type="function">
    <text evidence="1">NAD-binding protein involved in the addition of a carboxymethylaminomethyl (cmnm) group at the wobble position (U34) of certain tRNAs, forming tRNA-cmnm(5)s(2)U34.</text>
</comment>
<comment type="cofactor">
    <cofactor evidence="1">
        <name>FAD</name>
        <dbReference type="ChEBI" id="CHEBI:57692"/>
    </cofactor>
</comment>
<comment type="subunit">
    <text evidence="1">Homodimer. Heterotetramer of two MnmE and two MnmG subunits.</text>
</comment>
<comment type="subcellular location">
    <subcellularLocation>
        <location evidence="1">Cytoplasm</location>
    </subcellularLocation>
</comment>
<comment type="similarity">
    <text evidence="1">Belongs to the MnmG family.</text>
</comment>
<evidence type="ECO:0000255" key="1">
    <source>
        <dbReference type="HAMAP-Rule" id="MF_00129"/>
    </source>
</evidence>
<proteinExistence type="inferred from homology"/>
<keyword id="KW-0963">Cytoplasm</keyword>
<keyword id="KW-0274">FAD</keyword>
<keyword id="KW-0285">Flavoprotein</keyword>
<keyword id="KW-0520">NAD</keyword>
<keyword id="KW-0819">tRNA processing</keyword>
<gene>
    <name evidence="1" type="primary">mnmG</name>
    <name evidence="1" type="synonym">gidA</name>
    <name type="ordered locus">Dvul_1332</name>
</gene>
<sequence>MSTIRKPSPPDMYDCIVVGAGHAGCEAAMALARMGHATLLLTGNADRIGHLSCNPAIGGLAKGHMVKEIDALGGMMGLWADEAGIQFRTLNSSKGPAVRATRAQIDRDAYLRVVRRDIFAQPNLRVWQDMAESIIVEGGRAAGVRTAYGQEFRAHHVLLTTGTFLQGRIHVGLNNFPGGRLGDAPATGLSASLRAIGLELGRLKTGTTPRLLRDSIDFSLMEVQPPDDPPRPFSFRGPGVRLPQLPCHVTWTNERTHEAIRAGFDRSPMFTGVIKGTGARYCPSIEDKVARFPEKERHQVFVEPEGLESPECYPNGIPTSLPLEVQKAMIATIPGLENAQIVRPGYAIEYDYADPVQLRSTLETKALRGLWLAGQINGTSGYEEAAAQGLWAALNVSCTLRSMPPFLPGRDTAYMAVLVDDLVTKGTREPYRMFTSRAEHRLLLRENNADARLTETGRALGLVDDTHWQRFSTKRAALHSLLDELENRRITPDAAARDIFSRLGEPAPTKGVSLADILRRPSLTLPDLAPFWEGVTRFADDVREEAETIVKYSGYLARQQELVARSARMEDTVLPEDMDYTVIPGLTREIVEKLGKVRPHTLGQAARISGVTPAALTCLEIQLRKMGQR</sequence>
<dbReference type="EMBL" id="CP000527">
    <property type="protein sequence ID" value="ABM28350.1"/>
    <property type="molecule type" value="Genomic_DNA"/>
</dbReference>
<dbReference type="RefSeq" id="WP_011792201.1">
    <property type="nucleotide sequence ID" value="NC_008751.1"/>
</dbReference>
<dbReference type="SMR" id="A1VD34"/>
<dbReference type="KEGG" id="dvl:Dvul_1332"/>
<dbReference type="HOGENOM" id="CLU_007831_2_2_7"/>
<dbReference type="Proteomes" id="UP000009173">
    <property type="component" value="Chromosome"/>
</dbReference>
<dbReference type="GO" id="GO:0005829">
    <property type="term" value="C:cytosol"/>
    <property type="evidence" value="ECO:0007669"/>
    <property type="project" value="TreeGrafter"/>
</dbReference>
<dbReference type="GO" id="GO:0050660">
    <property type="term" value="F:flavin adenine dinucleotide binding"/>
    <property type="evidence" value="ECO:0007669"/>
    <property type="project" value="UniProtKB-UniRule"/>
</dbReference>
<dbReference type="GO" id="GO:0030488">
    <property type="term" value="P:tRNA methylation"/>
    <property type="evidence" value="ECO:0007669"/>
    <property type="project" value="TreeGrafter"/>
</dbReference>
<dbReference type="GO" id="GO:0002098">
    <property type="term" value="P:tRNA wobble uridine modification"/>
    <property type="evidence" value="ECO:0007669"/>
    <property type="project" value="InterPro"/>
</dbReference>
<dbReference type="FunFam" id="1.10.150.570:FF:000001">
    <property type="entry name" value="tRNA uridine 5-carboxymethylaminomethyl modification enzyme MnmG"/>
    <property type="match status" value="1"/>
</dbReference>
<dbReference type="FunFam" id="3.50.50.60:FF:000002">
    <property type="entry name" value="tRNA uridine 5-carboxymethylaminomethyl modification enzyme MnmG"/>
    <property type="match status" value="1"/>
</dbReference>
<dbReference type="Gene3D" id="3.50.50.60">
    <property type="entry name" value="FAD/NAD(P)-binding domain"/>
    <property type="match status" value="2"/>
</dbReference>
<dbReference type="Gene3D" id="1.10.150.570">
    <property type="entry name" value="GidA associated domain, C-terminal subdomain"/>
    <property type="match status" value="1"/>
</dbReference>
<dbReference type="Gene3D" id="1.10.10.1800">
    <property type="entry name" value="tRNA uridine 5-carboxymethylaminomethyl modification enzyme MnmG/GidA"/>
    <property type="match status" value="1"/>
</dbReference>
<dbReference type="HAMAP" id="MF_00129">
    <property type="entry name" value="MnmG_GidA"/>
    <property type="match status" value="1"/>
</dbReference>
<dbReference type="InterPro" id="IPR036188">
    <property type="entry name" value="FAD/NAD-bd_sf"/>
</dbReference>
<dbReference type="InterPro" id="IPR049312">
    <property type="entry name" value="GIDA_C_N"/>
</dbReference>
<dbReference type="InterPro" id="IPR004416">
    <property type="entry name" value="MnmG"/>
</dbReference>
<dbReference type="InterPro" id="IPR002218">
    <property type="entry name" value="MnmG-rel"/>
</dbReference>
<dbReference type="InterPro" id="IPR020595">
    <property type="entry name" value="MnmG-rel_CS"/>
</dbReference>
<dbReference type="InterPro" id="IPR026904">
    <property type="entry name" value="MnmG_C"/>
</dbReference>
<dbReference type="InterPro" id="IPR047001">
    <property type="entry name" value="MnmG_C_subdom"/>
</dbReference>
<dbReference type="InterPro" id="IPR044920">
    <property type="entry name" value="MnmG_C_subdom_sf"/>
</dbReference>
<dbReference type="InterPro" id="IPR040131">
    <property type="entry name" value="MnmG_N"/>
</dbReference>
<dbReference type="NCBIfam" id="TIGR00136">
    <property type="entry name" value="mnmG_gidA"/>
    <property type="match status" value="1"/>
</dbReference>
<dbReference type="PANTHER" id="PTHR11806">
    <property type="entry name" value="GLUCOSE INHIBITED DIVISION PROTEIN A"/>
    <property type="match status" value="1"/>
</dbReference>
<dbReference type="PANTHER" id="PTHR11806:SF0">
    <property type="entry name" value="PROTEIN MTO1 HOMOLOG, MITOCHONDRIAL"/>
    <property type="match status" value="1"/>
</dbReference>
<dbReference type="Pfam" id="PF01134">
    <property type="entry name" value="GIDA"/>
    <property type="match status" value="1"/>
</dbReference>
<dbReference type="Pfam" id="PF21680">
    <property type="entry name" value="GIDA_C_1st"/>
    <property type="match status" value="1"/>
</dbReference>
<dbReference type="Pfam" id="PF13932">
    <property type="entry name" value="SAM_GIDA_C"/>
    <property type="match status" value="1"/>
</dbReference>
<dbReference type="SMART" id="SM01228">
    <property type="entry name" value="GIDA_assoc_3"/>
    <property type="match status" value="1"/>
</dbReference>
<dbReference type="SUPFAM" id="SSF51905">
    <property type="entry name" value="FAD/NAD(P)-binding domain"/>
    <property type="match status" value="1"/>
</dbReference>
<dbReference type="PROSITE" id="PS01280">
    <property type="entry name" value="GIDA_1"/>
    <property type="match status" value="1"/>
</dbReference>
<name>MNMG_NITV4</name>